<dbReference type="EMBL" id="V00642">
    <property type="protein sequence ID" value="CAA23990.1"/>
    <property type="molecule type" value="mRNA"/>
</dbReference>
<dbReference type="PIR" id="A90787">
    <property type="entry name" value="YVBPMS"/>
</dbReference>
<dbReference type="RefSeq" id="YP_009640126.1">
    <property type="nucleotide sequence ID" value="NC_001417.2"/>
</dbReference>
<dbReference type="GeneID" id="1260897"/>
<dbReference type="Proteomes" id="UP000002127">
    <property type="component" value="Genome"/>
</dbReference>
<dbReference type="GO" id="GO:0020002">
    <property type="term" value="C:host cell plasma membrane"/>
    <property type="evidence" value="ECO:0007669"/>
    <property type="project" value="UniProtKB-SubCell"/>
</dbReference>
<dbReference type="GO" id="GO:0016020">
    <property type="term" value="C:membrane"/>
    <property type="evidence" value="ECO:0007669"/>
    <property type="project" value="UniProtKB-KW"/>
</dbReference>
<dbReference type="GO" id="GO:0031640">
    <property type="term" value="P:killing of cells of another organism"/>
    <property type="evidence" value="ECO:0007669"/>
    <property type="project" value="UniProtKB-KW"/>
</dbReference>
<dbReference type="InterPro" id="IPR022599">
    <property type="entry name" value="Phage_MS2_lysis"/>
</dbReference>
<dbReference type="Pfam" id="PF11125">
    <property type="entry name" value="Phage_MS2_lysis"/>
    <property type="match status" value="1"/>
</dbReference>
<organism>
    <name type="scientific">Escherichia phage MS2</name>
    <name type="common">Bacteriophage MS2</name>
    <dbReference type="NCBI Taxonomy" id="12022"/>
    <lineage>
        <taxon>Viruses</taxon>
        <taxon>Riboviria</taxon>
        <taxon>Orthornavirae</taxon>
        <taxon>Lenarviricota</taxon>
        <taxon>Leviviricetes</taxon>
        <taxon>Norzivirales</taxon>
        <taxon>Fiersviridae</taxon>
        <taxon>Emesvirus</taxon>
        <taxon>Emesvirus zinderi</taxon>
    </lineage>
</organism>
<protein>
    <recommendedName>
        <fullName>Lysis protein</fullName>
        <shortName>L protein</shortName>
    </recommendedName>
</protein>
<feature type="chain" id="PRO_0000164864" description="Lysis protein">
    <location>
        <begin position="1"/>
        <end position="75"/>
    </location>
</feature>
<feature type="transmembrane region" description="Helical" evidence="1">
    <location>
        <begin position="38"/>
        <end position="60"/>
    </location>
</feature>
<feature type="region of interest" description="Disordered" evidence="2">
    <location>
        <begin position="1"/>
        <end position="29"/>
    </location>
</feature>
<feature type="compositionally biased region" description="Polar residues" evidence="2">
    <location>
        <begin position="1"/>
        <end position="16"/>
    </location>
</feature>
<accession>P03609</accession>
<keyword id="KW-0204">Cytolysis</keyword>
<keyword id="KW-1030">Host cell inner membrane</keyword>
<keyword id="KW-0578">Host cell lysis by virus</keyword>
<keyword id="KW-1032">Host cell membrane</keyword>
<keyword id="KW-1033">Host cell outer membrane</keyword>
<keyword id="KW-1043">Host membrane</keyword>
<keyword id="KW-0472">Membrane</keyword>
<keyword id="KW-1185">Reference proteome</keyword>
<keyword id="KW-0812">Transmembrane</keyword>
<keyword id="KW-1133">Transmembrane helix</keyword>
<keyword id="KW-1188">Viral release from host cell</keyword>
<reference key="1">
    <citation type="journal article" date="1979" name="Cell">
        <title>Binding of mammalian ribosomes to MS2 phage RNA reveals an overlapping gene encoding a lysis function.</title>
        <authorList>
            <person name="Atkins J.F."/>
            <person name="Steitz J.A."/>
            <person name="Anderson C.W."/>
            <person name="Model P."/>
        </authorList>
    </citation>
    <scope>IDENTIFICATION OF PROTEIN CODING REGION</scope>
</reference>
<reference key="2">
    <citation type="journal article" date="1972" name="Nature">
        <title>Nucleotide sequence of the gene coding for the bacteriophage MS2 coat protein.</title>
        <authorList>
            <person name="Min Jou W."/>
            <person name="Haegeman G."/>
            <person name="Ysebaert M."/>
            <person name="Fiers W."/>
        </authorList>
    </citation>
    <scope>NUCLEOTIDE SEQUENCE [MRNA] OF 1-34</scope>
</reference>
<reference key="3">
    <citation type="journal article" date="1976" name="Nature">
        <title>Complete nucleotide sequence of bacteriophage MS2 RNA: primary and secondary structure of the replicase gene.</title>
        <authorList>
            <person name="Fiers W."/>
            <person name="Contreras R."/>
            <person name="Duerinck F."/>
            <person name="Haegeman G."/>
            <person name="Iserentant D."/>
            <person name="Merregaert J."/>
            <person name="Min Jou W."/>
            <person name="Molemans F."/>
            <person name="Raeymaekers A."/>
            <person name="van den Berghe A."/>
            <person name="Volckaert G."/>
            <person name="Ysebaert M."/>
        </authorList>
    </citation>
    <scope>NUCLEOTIDE SEQUENCE [MRNA] OF 29-75</scope>
</reference>
<reference key="4">
    <citation type="journal article" date="1987" name="J. Mol. Biol.">
        <title>Lysis gene of bacteriophage MS2 is activated by translation termination at the overlapping coat gene.</title>
        <authorList>
            <person name="Berkhout B."/>
            <person name="Schmidt B.F."/>
            <person name="van Strien A."/>
            <person name="van Boom J."/>
            <person name="van Westrenen J."/>
            <person name="van Duin J."/>
        </authorList>
    </citation>
    <scope>INDUCTION</scope>
</reference>
<reference key="5">
    <citation type="journal article" date="1988" name="J. Bacteriol.">
        <title>Induction of the autolytic system of Escherichia coli by specific insertion of bacteriophage MS2 lysis protein into the bacterial cell envelope.</title>
        <authorList>
            <person name="Walderich B."/>
            <person name="Ursinus-Woessner A."/>
            <person name="van Duin J."/>
            <person name="Hoeltje J.V."/>
        </authorList>
    </citation>
    <scope>SUBCELLULAR LOCATION</scope>
</reference>
<reference key="6">
    <citation type="journal article" date="1989" name="FEMS Microbiol. Lett.">
        <title>Functioning of the cloned phage MS2 lysis protein in Escherichia coli impaired in murein synthesis.</title>
        <authorList>
            <person name="Ursinus-Woessner A."/>
            <person name="Hoeltje J.V."/>
        </authorList>
    </citation>
    <scope>FUNCTION</scope>
</reference>
<reference key="7">
    <citation type="journal article" date="1989" name="J. Bacteriol.">
        <title>Specific localization of the lysis protein of bacteriophage MS2 in membrane adhesion sites of Escherichia coli.</title>
        <authorList>
            <person name="Walderich B."/>
            <person name="Hoeltje J.V."/>
        </authorList>
    </citation>
    <scope>SUBCELLULAR LOCATION</scope>
    <scope>FUNCTION</scope>
</reference>
<evidence type="ECO:0000255" key="1"/>
<evidence type="ECO:0000256" key="2">
    <source>
        <dbReference type="SAM" id="MobiDB-lite"/>
    </source>
</evidence>
<evidence type="ECO:0000269" key="3">
    <source>
    </source>
</evidence>
<evidence type="ECO:0000269" key="4">
    <source>
    </source>
</evidence>
<evidence type="ECO:0000269" key="5">
    <source>
    </source>
</evidence>
<evidence type="ECO:0000269" key="6">
    <source>
    </source>
</evidence>
<evidence type="ECO:0000305" key="7"/>
<organismHost>
    <name type="scientific">Escherichia coli</name>
    <dbReference type="NCBI Taxonomy" id="562"/>
</organismHost>
<name>LYS_BPMS2</name>
<comment type="function">
    <text evidence="3 4">Induces the formation of specific membrane adhesion sites between the inner and outer membranes, apparently leading to host cell lysis. Lysis may be performed via activation of host murein hydrolases.</text>
</comment>
<comment type="subcellular location">
    <subcellularLocation>
        <location evidence="4 5">Host cell inner membrane</location>
        <topology evidence="1">Single-pass membrane protein</topology>
    </subcellularLocation>
    <subcellularLocation>
        <location evidence="4 5">Host cell outer membrane</location>
        <topology evidence="1">Single-pass membrane protein</topology>
    </subcellularLocation>
</comment>
<comment type="induction">
    <text evidence="6">Lysis protein synthesis only occurs when the overlapping capsid gene is translated. Initiation at the lysis gene is prevented by a hairpin structure that sequesters the ribosomal binding site. The ribosome, terminating at the capsid reading frame, covers part of the lysis hairpin, thereby destabilizing the secondary structure and allowing the reading of the lysis gene.</text>
</comment>
<comment type="similarity">
    <text evidence="7">Belongs to the Leviviricetes lysis protein family.</text>
</comment>
<sequence>METRFPQQSQQTPASTNRRRPFKHEDYPCRRQQRSSTLYVLIFLAIFLSKFTNQLLLSLLEAVIRTVTTLQQLLT</sequence>
<proteinExistence type="evidence at transcript level"/>